<name>NU5M_PONAB</name>
<geneLocation type="mitochondrion"/>
<sequence length="603" mass="66730">MAMFTTMTALTLTSLIPPITATLINPNKKNSYPHYVKTAIASAFTISLIPTTMFICLGQETIVTNWCWTTTQTLQLSLSFKLDYFSMTFLPVALLITWSIMEFSLWYMASDPNINQFLKFLLIFLITMIILVTANNLLQLFIGWEGVGIMSFLLISWWYARTDANTAAIQAILYNRIGDIGFILALAWFLLHSNSWELQQVFLLNNNPNLLPLLGLLLAAAGKSAQLGLHPWLPSAMEGPTPVSALLHSSTMVVAGVFLLIRFHPLTENSPHIQTLTLCLGAITTLFAAICALTQNDIKKIVAFSTSSQLGLMMVTIGINQPHLALLHICTHAFFKALLFMCSGSIIHNLNNEQDIRKMGGLLKTMPLTSTSLTISSLALAGMPFLSGFYSKDLIIETANMSYTNTWALSITLIATSLTGAYSTRMILHTLTSKPHFPTPISINENNPTLLKPIKRLMLGSLFAGFLITNNIPPMSLPQVTTPPYLKLAALAATLLGLLVALDLNYLANKLKTKTPPPTFYFSIMLGFYPSIIHRMIPHLSLLMSQNLSLLLLDLTWLKKLMPKTISQHQTSASITISTQKGLIKLYFLSFLIPLLLILLMIS</sequence>
<keyword id="KW-0249">Electron transport</keyword>
<keyword id="KW-0472">Membrane</keyword>
<keyword id="KW-0496">Mitochondrion</keyword>
<keyword id="KW-0999">Mitochondrion inner membrane</keyword>
<keyword id="KW-0520">NAD</keyword>
<keyword id="KW-1185">Reference proteome</keyword>
<keyword id="KW-0679">Respiratory chain</keyword>
<keyword id="KW-1278">Translocase</keyword>
<keyword id="KW-0812">Transmembrane</keyword>
<keyword id="KW-1133">Transmembrane helix</keyword>
<keyword id="KW-0813">Transport</keyword>
<keyword id="KW-0830">Ubiquinone</keyword>
<accession>P92699</accession>
<protein>
    <recommendedName>
        <fullName>NADH-ubiquinone oxidoreductase chain 5</fullName>
        <ecNumber evidence="1">7.1.1.2</ecNumber>
    </recommendedName>
    <alternativeName>
        <fullName>NADH dehydrogenase subunit 5</fullName>
    </alternativeName>
</protein>
<evidence type="ECO:0000250" key="1">
    <source>
        <dbReference type="UniProtKB" id="P03915"/>
    </source>
</evidence>
<evidence type="ECO:0000250" key="2">
    <source>
        <dbReference type="UniProtKB" id="P03920"/>
    </source>
</evidence>
<evidence type="ECO:0000255" key="3"/>
<evidence type="ECO:0000305" key="4"/>
<organism>
    <name type="scientific">Pongo abelii</name>
    <name type="common">Sumatran orangutan</name>
    <name type="synonym">Pongo pygmaeus abelii</name>
    <dbReference type="NCBI Taxonomy" id="9601"/>
    <lineage>
        <taxon>Eukaryota</taxon>
        <taxon>Metazoa</taxon>
        <taxon>Chordata</taxon>
        <taxon>Craniata</taxon>
        <taxon>Vertebrata</taxon>
        <taxon>Euteleostomi</taxon>
        <taxon>Mammalia</taxon>
        <taxon>Eutheria</taxon>
        <taxon>Euarchontoglires</taxon>
        <taxon>Primates</taxon>
        <taxon>Haplorrhini</taxon>
        <taxon>Catarrhini</taxon>
        <taxon>Hominidae</taxon>
        <taxon>Pongo</taxon>
    </lineage>
</organism>
<comment type="function">
    <text evidence="1">Core subunit of the mitochondrial membrane respiratory chain NADH dehydrogenase (Complex I) which catalyzes electron transfer from NADH through the respiratory chain, using ubiquinone as an electron acceptor. Essential for the catalytic activity and assembly of complex I.</text>
</comment>
<comment type="catalytic activity">
    <reaction evidence="1">
        <text>a ubiquinone + NADH + 5 H(+)(in) = a ubiquinol + NAD(+) + 4 H(+)(out)</text>
        <dbReference type="Rhea" id="RHEA:29091"/>
        <dbReference type="Rhea" id="RHEA-COMP:9565"/>
        <dbReference type="Rhea" id="RHEA-COMP:9566"/>
        <dbReference type="ChEBI" id="CHEBI:15378"/>
        <dbReference type="ChEBI" id="CHEBI:16389"/>
        <dbReference type="ChEBI" id="CHEBI:17976"/>
        <dbReference type="ChEBI" id="CHEBI:57540"/>
        <dbReference type="ChEBI" id="CHEBI:57945"/>
        <dbReference type="EC" id="7.1.1.2"/>
    </reaction>
</comment>
<comment type="subunit">
    <text evidence="2">Core subunit of respiratory chain NADH dehydrogenase (Complex I) which is composed of 45 different subunits.</text>
</comment>
<comment type="subcellular location">
    <subcellularLocation>
        <location evidence="2">Mitochondrion inner membrane</location>
        <topology evidence="3">Multi-pass membrane protein</topology>
    </subcellularLocation>
</comment>
<comment type="similarity">
    <text evidence="4">Belongs to the complex I subunit 5 family.</text>
</comment>
<comment type="sequence caution" evidence="4">
    <conflict type="erroneous initiation">
        <sequence resource="EMBL-CDS" id="CAA66293"/>
    </conflict>
</comment>
<feature type="chain" id="PRO_0000118138" description="NADH-ubiquinone oxidoreductase chain 5">
    <location>
        <begin position="1"/>
        <end position="603"/>
    </location>
</feature>
<feature type="transmembrane region" description="Helical" evidence="3">
    <location>
        <begin position="4"/>
        <end position="24"/>
    </location>
</feature>
<feature type="transmembrane region" description="Helical" evidence="3">
    <location>
        <begin position="38"/>
        <end position="58"/>
    </location>
</feature>
<feature type="transmembrane region" description="Helical" evidence="3">
    <location>
        <begin position="89"/>
        <end position="109"/>
    </location>
</feature>
<feature type="transmembrane region" description="Helical" evidence="3">
    <location>
        <begin position="122"/>
        <end position="142"/>
    </location>
</feature>
<feature type="transmembrane region" description="Helical" evidence="3">
    <location>
        <begin position="171"/>
        <end position="191"/>
    </location>
</feature>
<feature type="transmembrane region" description="Helical" evidence="3">
    <location>
        <begin position="211"/>
        <end position="233"/>
    </location>
</feature>
<feature type="transmembrane region" description="Helical" evidence="3">
    <location>
        <begin position="241"/>
        <end position="261"/>
    </location>
</feature>
<feature type="transmembrane region" description="Helical" evidence="3">
    <location>
        <begin position="273"/>
        <end position="293"/>
    </location>
</feature>
<feature type="transmembrane region" description="Helical" evidence="3">
    <location>
        <begin position="301"/>
        <end position="320"/>
    </location>
</feature>
<feature type="transmembrane region" description="Helical" evidence="3">
    <location>
        <begin position="325"/>
        <end position="347"/>
    </location>
</feature>
<feature type="transmembrane region" description="Helical" evidence="3">
    <location>
        <begin position="366"/>
        <end position="386"/>
    </location>
</feature>
<feature type="transmembrane region" description="Helical" evidence="3">
    <location>
        <begin position="405"/>
        <end position="424"/>
    </location>
</feature>
<feature type="transmembrane region" description="Helical" evidence="3">
    <location>
        <begin position="457"/>
        <end position="477"/>
    </location>
</feature>
<feature type="transmembrane region" description="Helical" evidence="3">
    <location>
        <begin position="488"/>
        <end position="508"/>
    </location>
</feature>
<feature type="transmembrane region" description="Helical" evidence="3">
    <location>
        <begin position="524"/>
        <end position="544"/>
    </location>
</feature>
<feature type="transmembrane region" description="Helical" evidence="3">
    <location>
        <begin position="582"/>
        <end position="602"/>
    </location>
</feature>
<dbReference type="EC" id="7.1.1.2" evidence="1"/>
<dbReference type="EMBL" id="X97707">
    <property type="protein sequence ID" value="CAA66293.1"/>
    <property type="status" value="ALT_INIT"/>
    <property type="molecule type" value="Genomic_DNA"/>
</dbReference>
<dbReference type="RefSeq" id="NP_007845.1">
    <property type="nucleotide sequence ID" value="NC_002083.1"/>
</dbReference>
<dbReference type="SMR" id="P92699"/>
<dbReference type="FunCoup" id="P92699">
    <property type="interactions" value="580"/>
</dbReference>
<dbReference type="STRING" id="9601.ENSPPYP00000023449"/>
<dbReference type="GeneID" id="808484"/>
<dbReference type="KEGG" id="pon:808484"/>
<dbReference type="CTD" id="4540"/>
<dbReference type="eggNOG" id="KOG4668">
    <property type="taxonomic scope" value="Eukaryota"/>
</dbReference>
<dbReference type="HOGENOM" id="CLU_007100_6_0_1"/>
<dbReference type="InParanoid" id="P92699"/>
<dbReference type="TreeFam" id="TF342974"/>
<dbReference type="Proteomes" id="UP000001595">
    <property type="component" value="Mitochondrion"/>
</dbReference>
<dbReference type="GO" id="GO:0005743">
    <property type="term" value="C:mitochondrial inner membrane"/>
    <property type="evidence" value="ECO:0000250"/>
    <property type="project" value="UniProtKB"/>
</dbReference>
<dbReference type="GO" id="GO:0008137">
    <property type="term" value="F:NADH dehydrogenase (ubiquinone) activity"/>
    <property type="evidence" value="ECO:0000250"/>
    <property type="project" value="UniProtKB"/>
</dbReference>
<dbReference type="GO" id="GO:0015990">
    <property type="term" value="P:electron transport coupled proton transport"/>
    <property type="evidence" value="ECO:0007669"/>
    <property type="project" value="TreeGrafter"/>
</dbReference>
<dbReference type="GO" id="GO:0006120">
    <property type="term" value="P:mitochondrial electron transport, NADH to ubiquinone"/>
    <property type="evidence" value="ECO:0000250"/>
    <property type="project" value="UniProtKB"/>
</dbReference>
<dbReference type="GO" id="GO:0032981">
    <property type="term" value="P:mitochondrial respiratory chain complex I assembly"/>
    <property type="evidence" value="ECO:0000250"/>
    <property type="project" value="UniProtKB"/>
</dbReference>
<dbReference type="InterPro" id="IPR010934">
    <property type="entry name" value="NADH_DH_su5_C"/>
</dbReference>
<dbReference type="InterPro" id="IPR018393">
    <property type="entry name" value="NADHpl_OxRdtase_5_subgr"/>
</dbReference>
<dbReference type="InterPro" id="IPR001750">
    <property type="entry name" value="ND/Mrp_TM"/>
</dbReference>
<dbReference type="InterPro" id="IPR003945">
    <property type="entry name" value="NU5C-like"/>
</dbReference>
<dbReference type="InterPro" id="IPR001516">
    <property type="entry name" value="Proton_antipo_N"/>
</dbReference>
<dbReference type="NCBIfam" id="TIGR01974">
    <property type="entry name" value="NDH_I_L"/>
    <property type="match status" value="1"/>
</dbReference>
<dbReference type="PANTHER" id="PTHR42829">
    <property type="entry name" value="NADH-UBIQUINONE OXIDOREDUCTASE CHAIN 5"/>
    <property type="match status" value="1"/>
</dbReference>
<dbReference type="PANTHER" id="PTHR42829:SF2">
    <property type="entry name" value="NADH-UBIQUINONE OXIDOREDUCTASE CHAIN 5"/>
    <property type="match status" value="1"/>
</dbReference>
<dbReference type="Pfam" id="PF06455">
    <property type="entry name" value="NADH5_C"/>
    <property type="match status" value="1"/>
</dbReference>
<dbReference type="Pfam" id="PF00361">
    <property type="entry name" value="Proton_antipo_M"/>
    <property type="match status" value="1"/>
</dbReference>
<dbReference type="Pfam" id="PF00662">
    <property type="entry name" value="Proton_antipo_N"/>
    <property type="match status" value="1"/>
</dbReference>
<dbReference type="PRINTS" id="PR01434">
    <property type="entry name" value="NADHDHGNASE5"/>
</dbReference>
<proteinExistence type="inferred from homology"/>
<reference key="1">
    <citation type="journal article" date="1996" name="J. Mol. Evol.">
        <title>The mitochondrial DNA molecule of Sumatran orangutan and a molecular proposal for two (Bornean and Sumatran) species of orangutan.</title>
        <authorList>
            <person name="Xu X."/>
            <person name="Arnason U."/>
        </authorList>
    </citation>
    <scope>NUCLEOTIDE SEQUENCE [LARGE SCALE GENOMIC DNA]</scope>
</reference>
<gene>
    <name type="primary">MT-ND5</name>
    <name type="synonym">MTND5</name>
    <name type="synonym">NADH5</name>
    <name type="synonym">ND5</name>
</gene>